<proteinExistence type="evidence at protein level"/>
<comment type="function">
    <text evidence="2">Central protein that confers the ability to take up biotin on E.coli; while biotin transport requires BioM at very low (pM) concentrations at higher (nM) concentrations expression of BioY alone suffices for uptake.</text>
</comment>
<comment type="subunit">
    <text evidence="2">Part of a biotin transporter holocomplex composed of BioM, BioN and BioY. BioMN complexes can also be readily purified, but not BioMY nor BioNY complexes. BioY homodimers are also seen. Only the BioMNY complex has ATPase activity.</text>
</comment>
<comment type="interaction">
    <interactant intactId="EBI-6418966">
        <id>D5ARG8</id>
    </interactant>
    <interactant intactId="EBI-6418966">
        <id>D5ARG8</id>
        <label>bioY</label>
    </interactant>
    <organismsDiffer>false</organismsDiffer>
    <experiments>3</experiments>
</comment>
<comment type="subcellular location">
    <subcellularLocation>
        <location evidence="4">Cell inner membrane</location>
        <topology evidence="4">Multi-pass membrane protein</topology>
    </subcellularLocation>
</comment>
<comment type="similarity">
    <text evidence="3">Belongs to the BioY family.</text>
</comment>
<organism>
    <name type="scientific">Rhodobacter capsulatus (strain ATCC BAA-309 / NBRC 16581 / SB1003)</name>
    <dbReference type="NCBI Taxonomy" id="272942"/>
    <lineage>
        <taxon>Bacteria</taxon>
        <taxon>Pseudomonadati</taxon>
        <taxon>Pseudomonadota</taxon>
        <taxon>Alphaproteobacteria</taxon>
        <taxon>Rhodobacterales</taxon>
        <taxon>Rhodobacter group</taxon>
        <taxon>Rhodobacter</taxon>
    </lineage>
</organism>
<keyword id="KW-0997">Cell inner membrane</keyword>
<keyword id="KW-1003">Cell membrane</keyword>
<keyword id="KW-0472">Membrane</keyword>
<keyword id="KW-1185">Reference proteome</keyword>
<keyword id="KW-0812">Transmembrane</keyword>
<keyword id="KW-1133">Transmembrane helix</keyword>
<keyword id="KW-0813">Transport</keyword>
<protein>
    <recommendedName>
        <fullName>Biotin transporter BioY</fullName>
    </recommendedName>
    <alternativeName>
        <fullName>Biotin ECF transporter S component BioY</fullName>
    </alternativeName>
</protein>
<dbReference type="EMBL" id="CP001312">
    <property type="protein sequence ID" value="ADE86973.1"/>
    <property type="molecule type" value="Genomic_DNA"/>
</dbReference>
<dbReference type="RefSeq" id="WP_013068946.1">
    <property type="nucleotide sequence ID" value="NC_014034.1"/>
</dbReference>
<dbReference type="SMR" id="D5ARG8"/>
<dbReference type="STRING" id="272942.RCAP_rcc03249"/>
<dbReference type="TCDB" id="2.A.88.1.3">
    <property type="family name" value="the vitamin uptake transporter (vut) family"/>
</dbReference>
<dbReference type="TCDB" id="3.A.1.25.7">
    <property type="family name" value="the atp-binding cassette (abc) superfamily"/>
</dbReference>
<dbReference type="GeneID" id="31492030"/>
<dbReference type="KEGG" id="rcp:RCAP_rcc03249"/>
<dbReference type="eggNOG" id="COG1268">
    <property type="taxonomic scope" value="Bacteria"/>
</dbReference>
<dbReference type="HOGENOM" id="CLU_077931_0_1_5"/>
<dbReference type="OrthoDB" id="9803495at2"/>
<dbReference type="Proteomes" id="UP000002361">
    <property type="component" value="Chromosome"/>
</dbReference>
<dbReference type="GO" id="GO:0005886">
    <property type="term" value="C:plasma membrane"/>
    <property type="evidence" value="ECO:0007669"/>
    <property type="project" value="UniProtKB-SubCell"/>
</dbReference>
<dbReference type="GO" id="GO:0015225">
    <property type="term" value="F:biotin transmembrane transporter activity"/>
    <property type="evidence" value="ECO:0007669"/>
    <property type="project" value="InterPro"/>
</dbReference>
<dbReference type="GO" id="GO:0042802">
    <property type="term" value="F:identical protein binding"/>
    <property type="evidence" value="ECO:0000353"/>
    <property type="project" value="IntAct"/>
</dbReference>
<dbReference type="Gene3D" id="1.10.1760.20">
    <property type="match status" value="1"/>
</dbReference>
<dbReference type="InterPro" id="IPR003784">
    <property type="entry name" value="BioY"/>
</dbReference>
<dbReference type="PANTHER" id="PTHR34295">
    <property type="entry name" value="BIOTIN TRANSPORTER BIOY"/>
    <property type="match status" value="1"/>
</dbReference>
<dbReference type="PANTHER" id="PTHR34295:SF4">
    <property type="entry name" value="BIOTIN TRANSPORTER BIOY-RELATED"/>
    <property type="match status" value="1"/>
</dbReference>
<dbReference type="Pfam" id="PF02632">
    <property type="entry name" value="BioY"/>
    <property type="match status" value="1"/>
</dbReference>
<dbReference type="PIRSF" id="PIRSF016661">
    <property type="entry name" value="BioY"/>
    <property type="match status" value="1"/>
</dbReference>
<evidence type="ECO:0000255" key="1"/>
<evidence type="ECO:0000269" key="2">
    <source>
    </source>
</evidence>
<evidence type="ECO:0000305" key="3"/>
<evidence type="ECO:0000305" key="4">
    <source>
    </source>
</evidence>
<gene>
    <name type="primary">bioY</name>
    <name type="ordered locus">RCAP_rcc03249</name>
</gene>
<sequence length="190" mass="19306">MERNVTLIGLFAALIVALGFVPAIPLGFGVPITLQSLGVMLAGAVLGSWRGALAVLLVQALVAIGLPVLAGGRGGLGIFVGPTAGFLIGWLPAAFVTGLIVERLRRVPVALAAGIGATLGGIIIMYALGILGFWLVKNAGLKPEDAPISLWAATAIMAPFIPGDLVKVVVTGLVARTIAQYRPSALLARG</sequence>
<feature type="chain" id="PRO_0000409006" description="Biotin transporter BioY">
    <location>
        <begin position="1"/>
        <end position="190"/>
    </location>
</feature>
<feature type="transmembrane region" description="Helical" evidence="1">
    <location>
        <begin position="8"/>
        <end position="28"/>
    </location>
</feature>
<feature type="transmembrane region" description="Helical" evidence="1">
    <location>
        <begin position="29"/>
        <end position="49"/>
    </location>
</feature>
<feature type="transmembrane region" description="Helical" evidence="1">
    <location>
        <begin position="51"/>
        <end position="71"/>
    </location>
</feature>
<feature type="transmembrane region" description="Helical" evidence="1">
    <location>
        <begin position="76"/>
        <end position="96"/>
    </location>
</feature>
<feature type="transmembrane region" description="Helical" evidence="1">
    <location>
        <begin position="115"/>
        <end position="135"/>
    </location>
</feature>
<feature type="transmembrane region" description="Helical" evidence="1">
    <location>
        <begin position="146"/>
        <end position="166"/>
    </location>
</feature>
<accession>D5ARG8</accession>
<name>BIOY_RHOCB</name>
<reference key="1">
    <citation type="journal article" date="2010" name="J. Bacteriol.">
        <title>Complete genome sequence of the photosynthetic purple nonsulfur bacterium Rhodobacter capsulatus SB 1003.</title>
        <authorList>
            <person name="Strnad H."/>
            <person name="Lapidus A."/>
            <person name="Paces J."/>
            <person name="Ulbrich P."/>
            <person name="Vlcek C."/>
            <person name="Paces V."/>
            <person name="Haselkorn R."/>
        </authorList>
    </citation>
    <scope>NUCLEOTIDE SEQUENCE [LARGE SCALE GENOMIC DNA]</scope>
    <source>
        <strain>ATCC BAA-309 / NBRC 16581 / SB1003</strain>
    </source>
</reference>
<reference key="2">
    <citation type="journal article" date="2007" name="Proc. Natl. Acad. Sci. U.S.A.">
        <title>Biotin uptake in prokaryotes by solute transporters with an optional ATP-binding cassette-containing module.</title>
        <authorList>
            <person name="Hebbeln P."/>
            <person name="Rodionov D.A."/>
            <person name="Alfandega A."/>
            <person name="Eitinger T."/>
        </authorList>
    </citation>
    <scope>EXPRESSION IN E.COLI</scope>
    <scope>FUNCTION IN BIOTIN UPTAKE</scope>
    <scope>SUBCELLULAR LOCATION</scope>
    <scope>SUBUNIT</scope>
    <source>
        <strain>ATCC BAA-309 / NBRC 16581 / SB1003</strain>
    </source>
</reference>